<evidence type="ECO:0000255" key="1">
    <source>
        <dbReference type="HAMAP-Rule" id="MF_01898"/>
    </source>
</evidence>
<evidence type="ECO:0000305" key="2"/>
<keyword id="KW-0067">ATP-binding</keyword>
<keyword id="KW-0963">Cytoplasm</keyword>
<keyword id="KW-0238">DNA-binding</keyword>
<keyword id="KW-0413">Isomerase</keyword>
<keyword id="KW-0460">Magnesium</keyword>
<keyword id="KW-0479">Metal-binding</keyword>
<keyword id="KW-0547">Nucleotide-binding</keyword>
<keyword id="KW-1185">Reference proteome</keyword>
<keyword id="KW-0799">Topoisomerase</keyword>
<feature type="chain" id="PRO_0000145296" description="DNA gyrase subunit B">
    <location>
        <begin position="1"/>
        <end position="634"/>
    </location>
</feature>
<feature type="domain" description="Toprim" evidence="1">
    <location>
        <begin position="416"/>
        <end position="530"/>
    </location>
</feature>
<feature type="binding site" evidence="1">
    <location>
        <position position="422"/>
    </location>
    <ligand>
        <name>Mg(2+)</name>
        <dbReference type="ChEBI" id="CHEBI:18420"/>
        <label>1</label>
        <note>catalytic</note>
    </ligand>
</feature>
<feature type="binding site" evidence="1">
    <location>
        <position position="495"/>
    </location>
    <ligand>
        <name>Mg(2+)</name>
        <dbReference type="ChEBI" id="CHEBI:18420"/>
        <label>1</label>
        <note>catalytic</note>
    </ligand>
</feature>
<feature type="binding site" evidence="1">
    <location>
        <position position="495"/>
    </location>
    <ligand>
        <name>Mg(2+)</name>
        <dbReference type="ChEBI" id="CHEBI:18420"/>
        <label>2</label>
    </ligand>
</feature>
<feature type="binding site" evidence="1">
    <location>
        <position position="497"/>
    </location>
    <ligand>
        <name>Mg(2+)</name>
        <dbReference type="ChEBI" id="CHEBI:18420"/>
        <label>2</label>
    </ligand>
</feature>
<feature type="site" description="Interaction with DNA" evidence="1">
    <location>
        <position position="447"/>
    </location>
</feature>
<feature type="site" description="Interaction with DNA" evidence="1">
    <location>
        <position position="450"/>
    </location>
</feature>
<feature type="sequence conflict" description="In Ref. 3; AAA58940." evidence="2" ref="3">
    <original>G</original>
    <variation>A</variation>
    <location>
        <position position="51"/>
    </location>
</feature>
<feature type="sequence conflict" description="In Ref. 3; AAA58940." evidence="2" ref="3">
    <original>A</original>
    <variation>VT</variation>
    <location>
        <position position="87"/>
    </location>
</feature>
<sequence length="634" mass="71451">MNYVASNIQVLKGLEAVRKRPGMYIGSVSINGLHHLVYEVVDNSIDEALAGFCDRIDVIINLDNTITVIDNGRGIPTDIHEEEGISALELVLTKLHSGGKFNKGTYKVSGGLHGVGISVVNALSSFLEVYVNRDGKIFRQTFSKGIPTSKVEVVGESSVTGTKVTFLADSEIFETLDYNFDVLEKRLKELAFLNDKIYISIEDKRIGKEKSSKFYFEGGIKSFVDYLTNDSKAFQSEPYYIDGFINDVIVNVGLKWTESYSDNILSFVNNINTREGGTHVMGFRSGLTKAMNEAFKNSKISKKDIPNLTGDDFKEGLTAVISVKVPEPQFEGQTKSKLGNSEIRKIVEVVVYEHLLEIINLNPLEIDTILGKAIKAARAREAARKARESERKKNAFESLALPGKLADCTSKNPLEREIYIVEGDSAGGSAKMGRNRFFQAILPLWGKMLNVEKTREDKVITNDKLIPIIASLGAGVGKTFDITKLRYHKIIIMADADVDGSHIRTLLLAFFFRYMRDLIENGYIYIAMPPLYKIKYDNRIYYFYEEKEKEKFLDSIETKNRNSISLQRYKGLGEMNPTQLWETTMDPARRKMRLMNIDDAIEAEKIFVTLMGDLVEPRKEFIEQNALNVINLDV</sequence>
<protein>
    <recommendedName>
        <fullName evidence="1">DNA gyrase subunit B</fullName>
        <ecNumber evidence="1">5.6.2.2</ecNumber>
    </recommendedName>
</protein>
<gene>
    <name evidence="1" type="primary">gyrB</name>
    <name type="ordered locus">BB_0436</name>
</gene>
<comment type="function">
    <text evidence="1">A type II topoisomerase that negatively supercoils closed circular double-stranded (ds) DNA in an ATP-dependent manner to modulate DNA topology and maintain chromosomes in an underwound state. Negative supercoiling favors strand separation, and DNA replication, transcription, recombination and repair, all of which involve strand separation. Also able to catalyze the interconversion of other topological isomers of dsDNA rings, including catenanes and knotted rings. Type II topoisomerases break and join 2 DNA strands simultaneously in an ATP-dependent manner.</text>
</comment>
<comment type="catalytic activity">
    <reaction evidence="1">
        <text>ATP-dependent breakage, passage and rejoining of double-stranded DNA.</text>
        <dbReference type="EC" id="5.6.2.2"/>
    </reaction>
</comment>
<comment type="cofactor">
    <cofactor evidence="1">
        <name>Mg(2+)</name>
        <dbReference type="ChEBI" id="CHEBI:18420"/>
    </cofactor>
    <cofactor evidence="1">
        <name>Mn(2+)</name>
        <dbReference type="ChEBI" id="CHEBI:29035"/>
    </cofactor>
    <cofactor evidence="1">
        <name>Ca(2+)</name>
        <dbReference type="ChEBI" id="CHEBI:29108"/>
    </cofactor>
    <text evidence="1">Binds two Mg(2+) per subunit. The magnesium ions form salt bridges with both the protein and the DNA. Can also accept other divalent metal cations, such as Mn(2+) or Ca(2+).</text>
</comment>
<comment type="subunit">
    <text evidence="1">Heterotetramer, composed of two GyrA and two GyrB chains. In the heterotetramer, GyrA contains the active site tyrosine that forms a transient covalent intermediate with DNA, while GyrB binds cofactors and catalyzes ATP hydrolysis.</text>
</comment>
<comment type="subcellular location">
    <subcellularLocation>
        <location evidence="1">Cytoplasm</location>
    </subcellularLocation>
</comment>
<comment type="miscellaneous">
    <text evidence="1">Few gyrases are as efficient as E.coli at forming negative supercoils. Not all organisms have 2 type II topoisomerases; in organisms with a single type II topoisomerase this enzyme also has to decatenate newly replicated chromosomes.</text>
</comment>
<comment type="similarity">
    <text evidence="1">Belongs to the type II topoisomerase GyrB family.</text>
</comment>
<comment type="sequence caution" evidence="2">
    <conflict type="erroneous initiation">
        <sequence resource="EMBL-CDS" id="AAA58940"/>
    </conflict>
    <text>Extended N-terminus.</text>
</comment>
<accession>P33769</accession>
<accession>O30779</accession>
<name>GYRB_BORBU</name>
<dbReference type="EC" id="5.6.2.2" evidence="1"/>
<dbReference type="EMBL" id="AF017075">
    <property type="protein sequence ID" value="AAB67237.1"/>
    <property type="molecule type" value="Genomic_DNA"/>
</dbReference>
<dbReference type="EMBL" id="AE000783">
    <property type="protein sequence ID" value="AAC66802.2"/>
    <property type="molecule type" value="Genomic_DNA"/>
</dbReference>
<dbReference type="EMBL" id="U04527">
    <property type="protein sequence ID" value="AAA58940.1"/>
    <property type="status" value="ALT_INIT"/>
    <property type="molecule type" value="Genomic_DNA"/>
</dbReference>
<dbReference type="EMBL" id="Z12166">
    <property type="protein sequence ID" value="CAA78158.1"/>
    <property type="molecule type" value="Genomic_DNA"/>
</dbReference>
<dbReference type="PIR" id="C70154">
    <property type="entry name" value="C70154"/>
</dbReference>
<dbReference type="RefSeq" id="NP_212570.2">
    <property type="nucleotide sequence ID" value="NC_001318.1"/>
</dbReference>
<dbReference type="RefSeq" id="WP_010889750.1">
    <property type="nucleotide sequence ID" value="NC_001318.1"/>
</dbReference>
<dbReference type="SMR" id="P33769"/>
<dbReference type="STRING" id="224326.BB_0436"/>
<dbReference type="PaxDb" id="224326-BB_0436"/>
<dbReference type="EnsemblBacteria" id="AAC66802">
    <property type="protein sequence ID" value="AAC66802"/>
    <property type="gene ID" value="BB_0436"/>
</dbReference>
<dbReference type="KEGG" id="bbu:BB_0436"/>
<dbReference type="PATRIC" id="fig|224326.49.peg.827"/>
<dbReference type="HOGENOM" id="CLU_006146_1_2_12"/>
<dbReference type="OrthoDB" id="9802808at2"/>
<dbReference type="Proteomes" id="UP000001807">
    <property type="component" value="Chromosome"/>
</dbReference>
<dbReference type="GO" id="GO:0005694">
    <property type="term" value="C:chromosome"/>
    <property type="evidence" value="ECO:0007669"/>
    <property type="project" value="InterPro"/>
</dbReference>
<dbReference type="GO" id="GO:0005737">
    <property type="term" value="C:cytoplasm"/>
    <property type="evidence" value="ECO:0007669"/>
    <property type="project" value="UniProtKB-SubCell"/>
</dbReference>
<dbReference type="GO" id="GO:0005524">
    <property type="term" value="F:ATP binding"/>
    <property type="evidence" value="ECO:0007669"/>
    <property type="project" value="UniProtKB-UniRule"/>
</dbReference>
<dbReference type="GO" id="GO:0003677">
    <property type="term" value="F:DNA binding"/>
    <property type="evidence" value="ECO:0007669"/>
    <property type="project" value="UniProtKB-KW"/>
</dbReference>
<dbReference type="GO" id="GO:0003918">
    <property type="term" value="F:DNA topoisomerase type II (double strand cut, ATP-hydrolyzing) activity"/>
    <property type="evidence" value="ECO:0007669"/>
    <property type="project" value="UniProtKB-UniRule"/>
</dbReference>
<dbReference type="GO" id="GO:0046872">
    <property type="term" value="F:metal ion binding"/>
    <property type="evidence" value="ECO:0007669"/>
    <property type="project" value="UniProtKB-KW"/>
</dbReference>
<dbReference type="GO" id="GO:0006265">
    <property type="term" value="P:DNA topological change"/>
    <property type="evidence" value="ECO:0007669"/>
    <property type="project" value="UniProtKB-UniRule"/>
</dbReference>
<dbReference type="GO" id="GO:0006261">
    <property type="term" value="P:DNA-templated DNA replication"/>
    <property type="evidence" value="ECO:0007669"/>
    <property type="project" value="UniProtKB-UniRule"/>
</dbReference>
<dbReference type="CDD" id="cd16928">
    <property type="entry name" value="HATPase_GyrB-like"/>
    <property type="match status" value="1"/>
</dbReference>
<dbReference type="CDD" id="cd00822">
    <property type="entry name" value="TopoII_Trans_DNA_gyrase"/>
    <property type="match status" value="1"/>
</dbReference>
<dbReference type="CDD" id="cd03366">
    <property type="entry name" value="TOPRIM_TopoIIA_GyrB"/>
    <property type="match status" value="1"/>
</dbReference>
<dbReference type="FunFam" id="3.30.230.10:FF:000005">
    <property type="entry name" value="DNA gyrase subunit B"/>
    <property type="match status" value="1"/>
</dbReference>
<dbReference type="FunFam" id="3.30.565.10:FF:000002">
    <property type="entry name" value="DNA gyrase subunit B"/>
    <property type="match status" value="1"/>
</dbReference>
<dbReference type="FunFam" id="3.40.50.670:FF:000002">
    <property type="entry name" value="DNA gyrase subunit B"/>
    <property type="match status" value="1"/>
</dbReference>
<dbReference type="Gene3D" id="3.30.230.10">
    <property type="match status" value="1"/>
</dbReference>
<dbReference type="Gene3D" id="3.40.50.670">
    <property type="match status" value="1"/>
</dbReference>
<dbReference type="Gene3D" id="3.30.565.10">
    <property type="entry name" value="Histidine kinase-like ATPase, C-terminal domain"/>
    <property type="match status" value="1"/>
</dbReference>
<dbReference type="HAMAP" id="MF_01898">
    <property type="entry name" value="GyrB"/>
    <property type="match status" value="1"/>
</dbReference>
<dbReference type="InterPro" id="IPR002288">
    <property type="entry name" value="DNA_gyrase_B_C"/>
</dbReference>
<dbReference type="InterPro" id="IPR011557">
    <property type="entry name" value="GyrB"/>
</dbReference>
<dbReference type="InterPro" id="IPR036890">
    <property type="entry name" value="HATPase_C_sf"/>
</dbReference>
<dbReference type="InterPro" id="IPR020568">
    <property type="entry name" value="Ribosomal_Su5_D2-typ_SF"/>
</dbReference>
<dbReference type="InterPro" id="IPR014721">
    <property type="entry name" value="Ribsml_uS5_D2-typ_fold_subgr"/>
</dbReference>
<dbReference type="InterPro" id="IPR001241">
    <property type="entry name" value="Topo_IIA"/>
</dbReference>
<dbReference type="InterPro" id="IPR013760">
    <property type="entry name" value="Topo_IIA-like_dom_sf"/>
</dbReference>
<dbReference type="InterPro" id="IPR000565">
    <property type="entry name" value="Topo_IIA_B"/>
</dbReference>
<dbReference type="InterPro" id="IPR013759">
    <property type="entry name" value="Topo_IIA_B_C"/>
</dbReference>
<dbReference type="InterPro" id="IPR013506">
    <property type="entry name" value="Topo_IIA_bsu_dom2"/>
</dbReference>
<dbReference type="InterPro" id="IPR018522">
    <property type="entry name" value="TopoIIA_CS"/>
</dbReference>
<dbReference type="InterPro" id="IPR006171">
    <property type="entry name" value="TOPRIM_dom"/>
</dbReference>
<dbReference type="InterPro" id="IPR034160">
    <property type="entry name" value="TOPRIM_GyrB"/>
</dbReference>
<dbReference type="NCBIfam" id="TIGR01059">
    <property type="entry name" value="gyrB"/>
    <property type="match status" value="1"/>
</dbReference>
<dbReference type="NCBIfam" id="NF004189">
    <property type="entry name" value="PRK05644.1"/>
    <property type="match status" value="1"/>
</dbReference>
<dbReference type="NCBIfam" id="NF011501">
    <property type="entry name" value="PRK14939.1"/>
    <property type="match status" value="1"/>
</dbReference>
<dbReference type="PANTHER" id="PTHR45866:SF1">
    <property type="entry name" value="DNA GYRASE SUBUNIT B, MITOCHONDRIAL"/>
    <property type="match status" value="1"/>
</dbReference>
<dbReference type="PANTHER" id="PTHR45866">
    <property type="entry name" value="DNA GYRASE/TOPOISOMERASE SUBUNIT B"/>
    <property type="match status" value="1"/>
</dbReference>
<dbReference type="Pfam" id="PF00204">
    <property type="entry name" value="DNA_gyraseB"/>
    <property type="match status" value="1"/>
</dbReference>
<dbReference type="Pfam" id="PF00986">
    <property type="entry name" value="DNA_gyraseB_C"/>
    <property type="match status" value="1"/>
</dbReference>
<dbReference type="Pfam" id="PF02518">
    <property type="entry name" value="HATPase_c"/>
    <property type="match status" value="1"/>
</dbReference>
<dbReference type="Pfam" id="PF01751">
    <property type="entry name" value="Toprim"/>
    <property type="match status" value="1"/>
</dbReference>
<dbReference type="PRINTS" id="PR01159">
    <property type="entry name" value="DNAGYRASEB"/>
</dbReference>
<dbReference type="PRINTS" id="PR00418">
    <property type="entry name" value="TPI2FAMILY"/>
</dbReference>
<dbReference type="SMART" id="SM00387">
    <property type="entry name" value="HATPase_c"/>
    <property type="match status" value="1"/>
</dbReference>
<dbReference type="SMART" id="SM00433">
    <property type="entry name" value="TOP2c"/>
    <property type="match status" value="1"/>
</dbReference>
<dbReference type="SUPFAM" id="SSF55874">
    <property type="entry name" value="ATPase domain of HSP90 chaperone/DNA topoisomerase II/histidine kinase"/>
    <property type="match status" value="1"/>
</dbReference>
<dbReference type="SUPFAM" id="SSF54211">
    <property type="entry name" value="Ribosomal protein S5 domain 2-like"/>
    <property type="match status" value="1"/>
</dbReference>
<dbReference type="SUPFAM" id="SSF56719">
    <property type="entry name" value="Type II DNA topoisomerase"/>
    <property type="match status" value="1"/>
</dbReference>
<dbReference type="PROSITE" id="PS00177">
    <property type="entry name" value="TOPOISOMERASE_II"/>
    <property type="match status" value="1"/>
</dbReference>
<dbReference type="PROSITE" id="PS50880">
    <property type="entry name" value="TOPRIM"/>
    <property type="match status" value="1"/>
</dbReference>
<organism>
    <name type="scientific">Borreliella burgdorferi (strain ATCC 35210 / DSM 4680 / CIP 102532 / B31)</name>
    <name type="common">Borrelia burgdorferi</name>
    <dbReference type="NCBI Taxonomy" id="224326"/>
    <lineage>
        <taxon>Bacteria</taxon>
        <taxon>Pseudomonadati</taxon>
        <taxon>Spirochaetota</taxon>
        <taxon>Spirochaetia</taxon>
        <taxon>Spirochaetales</taxon>
        <taxon>Borreliaceae</taxon>
        <taxon>Borreliella</taxon>
    </lineage>
</organism>
<proteinExistence type="inferred from homology"/>
<reference key="1">
    <citation type="journal article" date="1994" name="J. Bacteriol.">
        <title>gyrB mutations in coumermycin A1-resistant Borrelia burgdorferi.</title>
        <authorList>
            <person name="Samuels D.S."/>
            <person name="Marconi R.T."/>
            <person name="Huang W.M."/>
            <person name="Garon C.F."/>
        </authorList>
    </citation>
    <scope>NUCLEOTIDE SEQUENCE [GENOMIC DNA]</scope>
    <source>
        <strain>ATCC 35210 / DSM 4680 / CIP 102532 / B31</strain>
    </source>
</reference>
<reference key="2">
    <citation type="journal article" date="1997" name="Nature">
        <title>Genomic sequence of a Lyme disease spirochaete, Borrelia burgdorferi.</title>
        <authorList>
            <person name="Fraser C.M."/>
            <person name="Casjens S."/>
            <person name="Huang W.M."/>
            <person name="Sutton G.G."/>
            <person name="Clayton R.A."/>
            <person name="Lathigra R."/>
            <person name="White O."/>
            <person name="Ketchum K.A."/>
            <person name="Dodson R.J."/>
            <person name="Hickey E.K."/>
            <person name="Gwinn M.L."/>
            <person name="Dougherty B.A."/>
            <person name="Tomb J.-F."/>
            <person name="Fleischmann R.D."/>
            <person name="Richardson D.L."/>
            <person name="Peterson J.D."/>
            <person name="Kerlavage A.R."/>
            <person name="Quackenbush J."/>
            <person name="Salzberg S.L."/>
            <person name="Hanson M."/>
            <person name="van Vugt R."/>
            <person name="Palmer N."/>
            <person name="Adams M.D."/>
            <person name="Gocayne J.D."/>
            <person name="Weidman J.F."/>
            <person name="Utterback T.R."/>
            <person name="Watthey L."/>
            <person name="McDonald L.A."/>
            <person name="Artiach P."/>
            <person name="Bowman C."/>
            <person name="Garland S.A."/>
            <person name="Fujii C."/>
            <person name="Cotton M.D."/>
            <person name="Horst K."/>
            <person name="Roberts K.M."/>
            <person name="Hatch B."/>
            <person name="Smith H.O."/>
            <person name="Venter J.C."/>
        </authorList>
    </citation>
    <scope>NUCLEOTIDE SEQUENCE [LARGE SCALE GENOMIC DNA]</scope>
    <source>
        <strain>ATCC 35210 / DSM 4680 / CIP 102532 / B31</strain>
    </source>
</reference>
<reference key="3">
    <citation type="journal article" date="1993" name="FEMS Microbiol. Lett.">
        <title>Unique genetic arrangement in the dnaA region of the Borrelia burgdorferi linear chromosome: nucleotide sequence of the dnaA gene.</title>
        <authorList>
            <person name="Old I.G."/>
            <person name="Margarita D."/>
            <person name="Saint-Girons I."/>
        </authorList>
    </citation>
    <scope>NUCLEOTIDE SEQUENCE [GENOMIC DNA] OF 1-380</scope>
    <source>
        <strain>212</strain>
    </source>
</reference>
<reference key="4">
    <citation type="journal article" date="1992" name="FEMS Microbiol. Lett.">
        <title>Mapping of genes on the linear chromosome of the bacterium Borrelia burgdorferi: possible locations for its origin of replication.</title>
        <authorList>
            <person name="Old I.G."/>
            <person name="Macdougall J.H."/>
            <person name="Saint-Girons I."/>
            <person name="Davidson B.E."/>
        </authorList>
    </citation>
    <scope>NUCLEOTIDE SEQUENCE [GENOMIC DNA] OF 297-380</scope>
    <source>
        <strain>212</strain>
    </source>
</reference>